<keyword id="KW-1217">Cell adhesion impairing toxin</keyword>
<keyword id="KW-1015">Disulfide bond</keyword>
<keyword id="KW-1199">Hemostasis impairing toxin</keyword>
<keyword id="KW-0378">Hydrolase</keyword>
<keyword id="KW-0479">Metal-binding</keyword>
<keyword id="KW-0482">Metalloprotease</keyword>
<keyword id="KW-1201">Platelet aggregation inhibiting toxin</keyword>
<keyword id="KW-0645">Protease</keyword>
<keyword id="KW-0964">Secreted</keyword>
<keyword id="KW-0800">Toxin</keyword>
<keyword id="KW-0862">Zinc</keyword>
<keyword id="KW-0865">Zymogen</keyword>
<accession>O93517</accession>
<protein>
    <recommendedName>
        <fullName>Zinc metalloproteinase/disintegrin</fullName>
    </recommendedName>
    <component>
        <recommendedName>
            <fullName>Snake venom metalloproteinase</fullName>
            <shortName>SVMP</shortName>
            <ecNumber>3.4.24.-</ecNumber>
        </recommendedName>
    </component>
    <component>
        <recommendedName>
            <fullName>Disintegrin-like salmosin-4</fullName>
        </recommendedName>
    </component>
</protein>
<proteinExistence type="evidence at transcript level"/>
<sequence>DEPLKTDLVSPPVCGNYFVEVGEDCDCGSPATCRDSCCDAATCKLRQGAQCREGLCCDQCRFKGAGTECRAATDECDMADLCTGRSAECTDRFQRNGQPCQNNNG</sequence>
<evidence type="ECO:0000250" key="1"/>
<evidence type="ECO:0000255" key="2">
    <source>
        <dbReference type="PROSITE-ProRule" id="PRU00068"/>
    </source>
</evidence>
<evidence type="ECO:0000255" key="3">
    <source>
        <dbReference type="PROSITE-ProRule" id="PRU00276"/>
    </source>
</evidence>
<evidence type="ECO:0000305" key="4"/>
<comment type="function">
    <molecule>Snake venom metalloproteinase</molecule>
    <text evidence="1">Impairs hemostasis in the envenomed animal.</text>
</comment>
<comment type="function">
    <molecule>Disintegrin-like salmosin-4</molecule>
    <text evidence="1">Inhibits platelet aggregation induced by ADP, thrombin, platelet-activating factor and collagen. Acts by inhibiting fibrinogen interaction with platelet receptors GPIIb/GPIIIa (ITGA2B/ITGB3) (By similarity).</text>
</comment>
<comment type="cofactor">
    <cofactor evidence="1">
        <name>Zn(2+)</name>
        <dbReference type="ChEBI" id="CHEBI:29105"/>
    </cofactor>
    <text evidence="1">Binds 1 zinc ion per subunit.</text>
</comment>
<comment type="subunit">
    <text evidence="1">Monomer.</text>
</comment>
<comment type="subcellular location">
    <subcellularLocation>
        <location evidence="1">Secreted</location>
    </subcellularLocation>
</comment>
<comment type="tissue specificity">
    <text>Expressed by the venom gland.</text>
</comment>
<comment type="similarity">
    <text evidence="4">Belongs to the venom metalloproteinase (M12B) family. P-III subfamily.</text>
</comment>
<organism>
    <name type="scientific">Gloydius brevicauda</name>
    <name type="common">Korean slamosa snake</name>
    <name type="synonym">Agkistrodon halys brevicaudus</name>
    <dbReference type="NCBI Taxonomy" id="3148161"/>
    <lineage>
        <taxon>Eukaryota</taxon>
        <taxon>Metazoa</taxon>
        <taxon>Chordata</taxon>
        <taxon>Craniata</taxon>
        <taxon>Vertebrata</taxon>
        <taxon>Euteleostomi</taxon>
        <taxon>Lepidosauria</taxon>
        <taxon>Squamata</taxon>
        <taxon>Bifurcata</taxon>
        <taxon>Unidentata</taxon>
        <taxon>Episquamata</taxon>
        <taxon>Toxicofera</taxon>
        <taxon>Serpentes</taxon>
        <taxon>Colubroidea</taxon>
        <taxon>Viperidae</taxon>
        <taxon>Crotalinae</taxon>
        <taxon>Gloydius</taxon>
    </lineage>
</organism>
<reference key="1">
    <citation type="journal article" date="1998" name="Mol. Cells">
        <title>Cloning and characterization of novel disintegrins from Agkistrodon halys venom.</title>
        <authorList>
            <person name="Park D.-S."/>
            <person name="Kang I.-C."/>
            <person name="Kim H.-D."/>
            <person name="Chung K.-H."/>
            <person name="Kim D.-S."/>
            <person name="Yun Y.-D."/>
        </authorList>
    </citation>
    <scope>NUCLEOTIDE SEQUENCE [MRNA]</scope>
    <source>
        <tissue>Venom gland</tissue>
    </source>
</reference>
<name>VM3S4_GLOBR</name>
<dbReference type="EC" id="3.4.24.-"/>
<dbReference type="EMBL" id="AF055338">
    <property type="protein sequence ID" value="AAC42598.1"/>
    <property type="molecule type" value="mRNA"/>
</dbReference>
<dbReference type="SMR" id="O93517"/>
<dbReference type="GO" id="GO:0005576">
    <property type="term" value="C:extracellular region"/>
    <property type="evidence" value="ECO:0007669"/>
    <property type="project" value="UniProtKB-SubCell"/>
</dbReference>
<dbReference type="GO" id="GO:0005886">
    <property type="term" value="C:plasma membrane"/>
    <property type="evidence" value="ECO:0007669"/>
    <property type="project" value="TreeGrafter"/>
</dbReference>
<dbReference type="GO" id="GO:0046872">
    <property type="term" value="F:metal ion binding"/>
    <property type="evidence" value="ECO:0007669"/>
    <property type="project" value="UniProtKB-KW"/>
</dbReference>
<dbReference type="GO" id="GO:0008237">
    <property type="term" value="F:metallopeptidase activity"/>
    <property type="evidence" value="ECO:0007669"/>
    <property type="project" value="UniProtKB-KW"/>
</dbReference>
<dbReference type="GO" id="GO:0090729">
    <property type="term" value="F:toxin activity"/>
    <property type="evidence" value="ECO:0007669"/>
    <property type="project" value="UniProtKB-KW"/>
</dbReference>
<dbReference type="GO" id="GO:0006508">
    <property type="term" value="P:proteolysis"/>
    <property type="evidence" value="ECO:0007669"/>
    <property type="project" value="UniProtKB-KW"/>
</dbReference>
<dbReference type="FunFam" id="4.10.70.10:FF:000001">
    <property type="entry name" value="Disintegrin and metalloproteinase domain-containing protein 22"/>
    <property type="match status" value="1"/>
</dbReference>
<dbReference type="Gene3D" id="4.10.70.10">
    <property type="entry name" value="Disintegrin domain"/>
    <property type="match status" value="1"/>
</dbReference>
<dbReference type="InterPro" id="IPR018358">
    <property type="entry name" value="Disintegrin_CS"/>
</dbReference>
<dbReference type="InterPro" id="IPR001762">
    <property type="entry name" value="Disintegrin_dom"/>
</dbReference>
<dbReference type="InterPro" id="IPR036436">
    <property type="entry name" value="Disintegrin_dom_sf"/>
</dbReference>
<dbReference type="PANTHER" id="PTHR11905">
    <property type="entry name" value="ADAM A DISINTEGRIN AND METALLOPROTEASE DOMAIN"/>
    <property type="match status" value="1"/>
</dbReference>
<dbReference type="PANTHER" id="PTHR11905:SF32">
    <property type="entry name" value="DISINTEGRIN AND METALLOPROTEINASE DOMAIN-CONTAINING PROTEIN 28"/>
    <property type="match status" value="1"/>
</dbReference>
<dbReference type="Pfam" id="PF00200">
    <property type="entry name" value="Disintegrin"/>
    <property type="match status" value="1"/>
</dbReference>
<dbReference type="PRINTS" id="PR00289">
    <property type="entry name" value="DISINTEGRIN"/>
</dbReference>
<dbReference type="SMART" id="SM00050">
    <property type="entry name" value="DISIN"/>
    <property type="match status" value="1"/>
</dbReference>
<dbReference type="SUPFAM" id="SSF57552">
    <property type="entry name" value="Blood coagulation inhibitor (disintegrin)"/>
    <property type="match status" value="1"/>
</dbReference>
<dbReference type="PROSITE" id="PS00427">
    <property type="entry name" value="DISINTEGRIN_1"/>
    <property type="match status" value="1"/>
</dbReference>
<dbReference type="PROSITE" id="PS50214">
    <property type="entry name" value="DISINTEGRIN_2"/>
    <property type="match status" value="1"/>
</dbReference>
<feature type="chain" id="PRO_0000319478" description="Snake venom metalloproteinase">
    <location>
        <begin position="1" status="less than"/>
        <end position="7"/>
    </location>
</feature>
<feature type="chain" id="PRO_0000319479" description="Disintegrin-like salmosin-4">
    <location>
        <begin position="8"/>
        <end position="98"/>
    </location>
</feature>
<feature type="propeptide" id="PRO_0000319480" evidence="1">
    <location>
        <begin position="99"/>
        <end position="105" status="greater than"/>
    </location>
</feature>
<feature type="domain" description="Peptidase M12B" evidence="3">
    <location>
        <begin position="1" status="less than"/>
        <end position="3"/>
    </location>
</feature>
<feature type="domain" description="Disintegrin" evidence="2">
    <location>
        <begin position="11"/>
        <end position="96"/>
    </location>
</feature>
<feature type="short sequence motif" description="D/ECD-tripeptide">
    <location>
        <begin position="75"/>
        <end position="77"/>
    </location>
</feature>
<feature type="disulfide bond" evidence="1">
    <location>
        <begin position="25"/>
        <end position="43"/>
    </location>
</feature>
<feature type="disulfide bond" evidence="1">
    <location>
        <begin position="27"/>
        <end position="38"/>
    </location>
</feature>
<feature type="disulfide bond" evidence="1">
    <location>
        <begin position="37"/>
        <end position="60"/>
    </location>
</feature>
<feature type="disulfide bond" evidence="1">
    <location>
        <begin position="51"/>
        <end position="57"/>
    </location>
</feature>
<feature type="disulfide bond" evidence="1">
    <location>
        <begin position="56"/>
        <end position="82"/>
    </location>
</feature>
<feature type="disulfide bond" evidence="1">
    <location>
        <begin position="69"/>
        <end position="89"/>
    </location>
</feature>
<feature type="non-terminal residue">
    <location>
        <position position="1"/>
    </location>
</feature>
<feature type="non-terminal residue">
    <location>
        <position position="105"/>
    </location>
</feature>